<sequence length="167" mass="17935">MASNDDAPVGAANGNGNTGAQPSLNVLAQYVKDLSFESPGAPNSLRGRDKAPGIAINVNVNANPLSDKQFDVNLTLNAKASFDQEVLFNVELVYGGVFAISGFPQEHMLPILFIECPRLLFPFARQIIAEATRNGGFPPLMLDPIDFAQMFQQKIAEDQAASKVKVS</sequence>
<evidence type="ECO:0000255" key="1">
    <source>
        <dbReference type="HAMAP-Rule" id="MF_00821"/>
    </source>
</evidence>
<evidence type="ECO:0000256" key="2">
    <source>
        <dbReference type="SAM" id="MobiDB-lite"/>
    </source>
</evidence>
<reference key="1">
    <citation type="journal article" date="2000" name="DNA Res.">
        <title>Complete genome structure of the nitrogen-fixing symbiotic bacterium Mesorhizobium loti.</title>
        <authorList>
            <person name="Kaneko T."/>
            <person name="Nakamura Y."/>
            <person name="Sato S."/>
            <person name="Asamizu E."/>
            <person name="Kato T."/>
            <person name="Sasamoto S."/>
            <person name="Watanabe A."/>
            <person name="Idesawa K."/>
            <person name="Ishikawa A."/>
            <person name="Kawashima K."/>
            <person name="Kimura T."/>
            <person name="Kishida Y."/>
            <person name="Kiyokawa C."/>
            <person name="Kohara M."/>
            <person name="Matsumoto M."/>
            <person name="Matsuno A."/>
            <person name="Mochizuki Y."/>
            <person name="Nakayama S."/>
            <person name="Nakazaki N."/>
            <person name="Shimpo S."/>
            <person name="Sugimoto M."/>
            <person name="Takeuchi C."/>
            <person name="Yamada M."/>
            <person name="Tabata S."/>
        </authorList>
    </citation>
    <scope>NUCLEOTIDE SEQUENCE [LARGE SCALE GENOMIC DNA]</scope>
    <source>
        <strain>LMG 29417 / CECT 9101 / MAFF 303099</strain>
    </source>
</reference>
<feature type="chain" id="PRO_0000055405" description="Protein-export protein SecB">
    <location>
        <begin position="1"/>
        <end position="167"/>
    </location>
</feature>
<feature type="region of interest" description="Disordered" evidence="2">
    <location>
        <begin position="1"/>
        <end position="20"/>
    </location>
</feature>
<accession>Q98DU8</accession>
<organism>
    <name type="scientific">Mesorhizobium japonicum (strain LMG 29417 / CECT 9101 / MAFF 303099)</name>
    <name type="common">Mesorhizobium loti (strain MAFF 303099)</name>
    <dbReference type="NCBI Taxonomy" id="266835"/>
    <lineage>
        <taxon>Bacteria</taxon>
        <taxon>Pseudomonadati</taxon>
        <taxon>Pseudomonadota</taxon>
        <taxon>Alphaproteobacteria</taxon>
        <taxon>Hyphomicrobiales</taxon>
        <taxon>Phyllobacteriaceae</taxon>
        <taxon>Mesorhizobium</taxon>
    </lineage>
</organism>
<keyword id="KW-0143">Chaperone</keyword>
<keyword id="KW-0963">Cytoplasm</keyword>
<keyword id="KW-0653">Protein transport</keyword>
<keyword id="KW-0811">Translocation</keyword>
<keyword id="KW-0813">Transport</keyword>
<proteinExistence type="inferred from homology"/>
<gene>
    <name evidence="1" type="primary">secB</name>
    <name type="ordered locus">mll4541</name>
</gene>
<protein>
    <recommendedName>
        <fullName evidence="1">Protein-export protein SecB</fullName>
    </recommendedName>
</protein>
<comment type="function">
    <text evidence="1">One of the proteins required for the normal export of preproteins out of the cell cytoplasm. It is a molecular chaperone that binds to a subset of precursor proteins, maintaining them in a translocation-competent state. It also specifically binds to its receptor SecA.</text>
</comment>
<comment type="subunit">
    <text evidence="1">Homotetramer, a dimer of dimers. One homotetramer interacts with 1 SecA dimer.</text>
</comment>
<comment type="subcellular location">
    <subcellularLocation>
        <location evidence="1">Cytoplasm</location>
    </subcellularLocation>
</comment>
<comment type="similarity">
    <text evidence="1">Belongs to the SecB family.</text>
</comment>
<name>SECB_RHILO</name>
<dbReference type="EMBL" id="BA000012">
    <property type="protein sequence ID" value="BAB51172.1"/>
    <property type="molecule type" value="Genomic_DNA"/>
</dbReference>
<dbReference type="RefSeq" id="WP_010912514.1">
    <property type="nucleotide sequence ID" value="NC_002678.2"/>
</dbReference>
<dbReference type="SMR" id="Q98DU8"/>
<dbReference type="GeneID" id="66681081"/>
<dbReference type="KEGG" id="mlo:mll4541"/>
<dbReference type="eggNOG" id="COG1952">
    <property type="taxonomic scope" value="Bacteria"/>
</dbReference>
<dbReference type="HOGENOM" id="CLU_111574_0_0_5"/>
<dbReference type="Proteomes" id="UP000000552">
    <property type="component" value="Chromosome"/>
</dbReference>
<dbReference type="GO" id="GO:0005737">
    <property type="term" value="C:cytoplasm"/>
    <property type="evidence" value="ECO:0007669"/>
    <property type="project" value="UniProtKB-SubCell"/>
</dbReference>
<dbReference type="GO" id="GO:0051082">
    <property type="term" value="F:unfolded protein binding"/>
    <property type="evidence" value="ECO:0007669"/>
    <property type="project" value="InterPro"/>
</dbReference>
<dbReference type="GO" id="GO:0006457">
    <property type="term" value="P:protein folding"/>
    <property type="evidence" value="ECO:0007669"/>
    <property type="project" value="UniProtKB-UniRule"/>
</dbReference>
<dbReference type="GO" id="GO:0051262">
    <property type="term" value="P:protein tetramerization"/>
    <property type="evidence" value="ECO:0007669"/>
    <property type="project" value="InterPro"/>
</dbReference>
<dbReference type="GO" id="GO:0015031">
    <property type="term" value="P:protein transport"/>
    <property type="evidence" value="ECO:0007669"/>
    <property type="project" value="UniProtKB-UniRule"/>
</dbReference>
<dbReference type="Gene3D" id="3.10.420.10">
    <property type="entry name" value="SecB-like"/>
    <property type="match status" value="1"/>
</dbReference>
<dbReference type="HAMAP" id="MF_00821">
    <property type="entry name" value="SecB"/>
    <property type="match status" value="1"/>
</dbReference>
<dbReference type="InterPro" id="IPR003708">
    <property type="entry name" value="SecB"/>
</dbReference>
<dbReference type="InterPro" id="IPR035958">
    <property type="entry name" value="SecB-like_sf"/>
</dbReference>
<dbReference type="NCBIfam" id="NF004392">
    <property type="entry name" value="PRK05751.1-3"/>
    <property type="match status" value="1"/>
</dbReference>
<dbReference type="NCBIfam" id="TIGR00809">
    <property type="entry name" value="secB"/>
    <property type="match status" value="1"/>
</dbReference>
<dbReference type="PANTHER" id="PTHR36918">
    <property type="match status" value="1"/>
</dbReference>
<dbReference type="PANTHER" id="PTHR36918:SF1">
    <property type="entry name" value="PROTEIN-EXPORT PROTEIN SECB"/>
    <property type="match status" value="1"/>
</dbReference>
<dbReference type="Pfam" id="PF02556">
    <property type="entry name" value="SecB"/>
    <property type="match status" value="1"/>
</dbReference>
<dbReference type="PRINTS" id="PR01594">
    <property type="entry name" value="SECBCHAPRONE"/>
</dbReference>
<dbReference type="SUPFAM" id="SSF54611">
    <property type="entry name" value="SecB-like"/>
    <property type="match status" value="1"/>
</dbReference>